<dbReference type="EMBL" id="CP000901">
    <property type="protein sequence ID" value="ABX85300.1"/>
    <property type="molecule type" value="Genomic_DNA"/>
</dbReference>
<dbReference type="RefSeq" id="WP_002230648.1">
    <property type="nucleotide sequence ID" value="NZ_CP009935.1"/>
</dbReference>
<dbReference type="SMR" id="A9R6R1"/>
<dbReference type="KEGG" id="ypg:YpAngola_A0152"/>
<dbReference type="PATRIC" id="fig|349746.12.peg.1093"/>
<dbReference type="GO" id="GO:0005829">
    <property type="term" value="C:cytosol"/>
    <property type="evidence" value="ECO:0007669"/>
    <property type="project" value="TreeGrafter"/>
</dbReference>
<dbReference type="GO" id="GO:0005506">
    <property type="term" value="F:iron ion binding"/>
    <property type="evidence" value="ECO:0007669"/>
    <property type="project" value="UniProtKB-UniRule"/>
</dbReference>
<dbReference type="GO" id="GO:0034599">
    <property type="term" value="P:cellular response to oxidative stress"/>
    <property type="evidence" value="ECO:0007669"/>
    <property type="project" value="TreeGrafter"/>
</dbReference>
<dbReference type="FunFam" id="1.10.3880.10:FF:000001">
    <property type="entry name" value="Probable Fe(2+)-trafficking protein"/>
    <property type="match status" value="1"/>
</dbReference>
<dbReference type="Gene3D" id="1.10.3880.10">
    <property type="entry name" value="Fe(II) trafficking protein YggX"/>
    <property type="match status" value="1"/>
</dbReference>
<dbReference type="HAMAP" id="MF_00686">
    <property type="entry name" value="Fe_traffic_YggX"/>
    <property type="match status" value="1"/>
</dbReference>
<dbReference type="InterPro" id="IPR007457">
    <property type="entry name" value="Fe_traffick_prot_YggX"/>
</dbReference>
<dbReference type="InterPro" id="IPR036766">
    <property type="entry name" value="Fe_traffick_prot_YggX_sf"/>
</dbReference>
<dbReference type="NCBIfam" id="NF003817">
    <property type="entry name" value="PRK05408.1"/>
    <property type="match status" value="1"/>
</dbReference>
<dbReference type="PANTHER" id="PTHR36965">
    <property type="entry name" value="FE(2+)-TRAFFICKING PROTEIN-RELATED"/>
    <property type="match status" value="1"/>
</dbReference>
<dbReference type="PANTHER" id="PTHR36965:SF1">
    <property type="entry name" value="FE(2+)-TRAFFICKING PROTEIN-RELATED"/>
    <property type="match status" value="1"/>
</dbReference>
<dbReference type="Pfam" id="PF04362">
    <property type="entry name" value="Iron_traffic"/>
    <property type="match status" value="1"/>
</dbReference>
<dbReference type="PIRSF" id="PIRSF029827">
    <property type="entry name" value="Fe_traffic_YggX"/>
    <property type="match status" value="1"/>
</dbReference>
<dbReference type="SUPFAM" id="SSF111148">
    <property type="entry name" value="YggX-like"/>
    <property type="match status" value="1"/>
</dbReference>
<name>FETP_YERPG</name>
<evidence type="ECO:0000255" key="1">
    <source>
        <dbReference type="HAMAP-Rule" id="MF_00686"/>
    </source>
</evidence>
<gene>
    <name type="ordered locus">YpAngola_A0152</name>
</gene>
<keyword id="KW-0408">Iron</keyword>
<protein>
    <recommendedName>
        <fullName evidence="1">Probable Fe(2+)-trafficking protein</fullName>
    </recommendedName>
</protein>
<reference key="1">
    <citation type="journal article" date="2010" name="J. Bacteriol.">
        <title>Genome sequence of the deep-rooted Yersinia pestis strain Angola reveals new insights into the evolution and pangenome of the plague bacterium.</title>
        <authorList>
            <person name="Eppinger M."/>
            <person name="Worsham P.L."/>
            <person name="Nikolich M.P."/>
            <person name="Riley D.R."/>
            <person name="Sebastian Y."/>
            <person name="Mou S."/>
            <person name="Achtman M."/>
            <person name="Lindler L.E."/>
            <person name="Ravel J."/>
        </authorList>
    </citation>
    <scope>NUCLEOTIDE SEQUENCE [LARGE SCALE GENOMIC DNA]</scope>
    <source>
        <strain>Angola</strain>
    </source>
</reference>
<organism>
    <name type="scientific">Yersinia pestis bv. Antiqua (strain Angola)</name>
    <dbReference type="NCBI Taxonomy" id="349746"/>
    <lineage>
        <taxon>Bacteria</taxon>
        <taxon>Pseudomonadati</taxon>
        <taxon>Pseudomonadota</taxon>
        <taxon>Gammaproteobacteria</taxon>
        <taxon>Enterobacterales</taxon>
        <taxon>Yersiniaceae</taxon>
        <taxon>Yersinia</taxon>
    </lineage>
</organism>
<accession>A9R6R1</accession>
<sequence length="90" mass="10608">MSRTIFCTFLKKDAEGQDFQLYPGEIGKRIYNEISKEAWSQWITKQTMLINEKKLSMMNIEDRKLLEQEMVNFLFEGQDVHIAGYTPPSK</sequence>
<comment type="function">
    <text evidence="1">Could be a mediator in iron transactions between iron acquisition and iron-requiring processes, such as synthesis and/or repair of Fe-S clusters in biosynthetic enzymes.</text>
</comment>
<comment type="subunit">
    <text evidence="1">Monomer.</text>
</comment>
<comment type="similarity">
    <text evidence="1">Belongs to the Fe(2+)-trafficking protein family.</text>
</comment>
<proteinExistence type="inferred from homology"/>
<feature type="chain" id="PRO_1000131874" description="Probable Fe(2+)-trafficking protein">
    <location>
        <begin position="1"/>
        <end position="90"/>
    </location>
</feature>